<gene>
    <name type="primary">MAL11</name>
    <name type="synonym">AGT1</name>
    <name type="synonym">MAL1T</name>
    <name type="synonym">MTP1</name>
    <name type="ordered locus">YGR289C</name>
</gene>
<accession>P53048</accession>
<accession>D6VV66</accession>
<proteinExistence type="evidence at protein level"/>
<name>MAL11_YEAST</name>
<protein>
    <recommendedName>
        <fullName>General alpha-glucoside permease</fullName>
    </recommendedName>
    <alternativeName>
        <fullName>Maltose permease MAL11</fullName>
    </alternativeName>
    <alternativeName>
        <fullName>Maltose transport protein MAL11</fullName>
    </alternativeName>
</protein>
<organism>
    <name type="scientific">Saccharomyces cerevisiae (strain ATCC 204508 / S288c)</name>
    <name type="common">Baker's yeast</name>
    <dbReference type="NCBI Taxonomy" id="559292"/>
    <lineage>
        <taxon>Eukaryota</taxon>
        <taxon>Fungi</taxon>
        <taxon>Dikarya</taxon>
        <taxon>Ascomycota</taxon>
        <taxon>Saccharomycotina</taxon>
        <taxon>Saccharomycetes</taxon>
        <taxon>Saccharomycetales</taxon>
        <taxon>Saccharomycetaceae</taxon>
        <taxon>Saccharomyces</taxon>
    </lineage>
</organism>
<keyword id="KW-1003">Cell membrane</keyword>
<keyword id="KW-0325">Glycoprotein</keyword>
<keyword id="KW-0462">Maltose metabolism</keyword>
<keyword id="KW-0472">Membrane</keyword>
<keyword id="KW-1185">Reference proteome</keyword>
<keyword id="KW-0762">Sugar transport</keyword>
<keyword id="KW-0769">Symport</keyword>
<keyword id="KW-0812">Transmembrane</keyword>
<keyword id="KW-1133">Transmembrane helix</keyword>
<keyword id="KW-0813">Transport</keyword>
<evidence type="ECO:0000255" key="1"/>
<evidence type="ECO:0000256" key="2">
    <source>
        <dbReference type="SAM" id="MobiDB-lite"/>
    </source>
</evidence>
<evidence type="ECO:0000269" key="3">
    <source>
    </source>
</evidence>
<evidence type="ECO:0000269" key="4">
    <source>
    </source>
</evidence>
<evidence type="ECO:0000269" key="5">
    <source>
    </source>
</evidence>
<evidence type="ECO:0000305" key="6"/>
<evidence type="ECO:0000305" key="7">
    <source>
    </source>
</evidence>
<reference key="1">
    <citation type="journal article" date="1995" name="Mol. Microbiol.">
        <title>Characterization of AGT1 encoding a general alpha-glucoside transporter from Saccharomyces.</title>
        <authorList>
            <person name="Han E.-K."/>
            <person name="Cotty F."/>
            <person name="Sottas C."/>
            <person name="Jiang H."/>
            <person name="Michels C.A."/>
        </authorList>
    </citation>
    <scope>NUCLEOTIDE SEQUENCE [GENOMIC DNA]</scope>
    <scope>FUNCTION</scope>
    <scope>SUBCELLULAR LOCATION</scope>
    <scope>INDUCTION</scope>
</reference>
<reference key="2">
    <citation type="journal article" date="1997" name="Yeast">
        <title>Sequence analysis of a near-subtelomeric 35.4 kb DNA segment on the right arm of chromosome VII from Saccharomyces cerevisiae carrying the MAL1 locus reveals 15 complete open reading frames, including ZUO1, BGL2 and BIO2 genes and an ABC transporter gene.</title>
        <authorList>
            <person name="Volckaert G."/>
            <person name="Voet M."/>
            <person name="Robben J."/>
        </authorList>
    </citation>
    <scope>NUCLEOTIDE SEQUENCE [GENOMIC DNA]</scope>
    <source>
        <strain>ATCC 96604 / S288c / FY1679</strain>
    </source>
</reference>
<reference key="3">
    <citation type="journal article" date="1997" name="Nature">
        <title>The nucleotide sequence of Saccharomyces cerevisiae chromosome VII.</title>
        <authorList>
            <person name="Tettelin H."/>
            <person name="Agostoni-Carbone M.L."/>
            <person name="Albermann K."/>
            <person name="Albers M."/>
            <person name="Arroyo J."/>
            <person name="Backes U."/>
            <person name="Barreiros T."/>
            <person name="Bertani I."/>
            <person name="Bjourson A.J."/>
            <person name="Brueckner M."/>
            <person name="Bruschi C.V."/>
            <person name="Carignani G."/>
            <person name="Castagnoli L."/>
            <person name="Cerdan E."/>
            <person name="Clemente M.L."/>
            <person name="Coblenz A."/>
            <person name="Coglievina M."/>
            <person name="Coissac E."/>
            <person name="Defoor E."/>
            <person name="Del Bino S."/>
            <person name="Delius H."/>
            <person name="Delneri D."/>
            <person name="de Wergifosse P."/>
            <person name="Dujon B."/>
            <person name="Durand P."/>
            <person name="Entian K.-D."/>
            <person name="Eraso P."/>
            <person name="Escribano V."/>
            <person name="Fabiani L."/>
            <person name="Fartmann B."/>
            <person name="Feroli F."/>
            <person name="Feuermann M."/>
            <person name="Frontali L."/>
            <person name="Garcia-Gonzalez M."/>
            <person name="Garcia-Saez M.I."/>
            <person name="Goffeau A."/>
            <person name="Guerreiro P."/>
            <person name="Hani J."/>
            <person name="Hansen M."/>
            <person name="Hebling U."/>
            <person name="Hernandez K."/>
            <person name="Heumann K."/>
            <person name="Hilger F."/>
            <person name="Hofmann B."/>
            <person name="Indge K.J."/>
            <person name="James C.M."/>
            <person name="Klima R."/>
            <person name="Koetter P."/>
            <person name="Kramer B."/>
            <person name="Kramer W."/>
            <person name="Lauquin G."/>
            <person name="Leuther H."/>
            <person name="Louis E.J."/>
            <person name="Maillier E."/>
            <person name="Marconi A."/>
            <person name="Martegani E."/>
            <person name="Mazon M.J."/>
            <person name="Mazzoni C."/>
            <person name="McReynolds A.D.K."/>
            <person name="Melchioretto P."/>
            <person name="Mewes H.-W."/>
            <person name="Minenkova O."/>
            <person name="Mueller-Auer S."/>
            <person name="Nawrocki A."/>
            <person name="Netter P."/>
            <person name="Neu R."/>
            <person name="Nombela C."/>
            <person name="Oliver S.G."/>
            <person name="Panzeri L."/>
            <person name="Paoluzi S."/>
            <person name="Plevani P."/>
            <person name="Portetelle D."/>
            <person name="Portillo F."/>
            <person name="Potier S."/>
            <person name="Purnelle B."/>
            <person name="Rieger M."/>
            <person name="Riles L."/>
            <person name="Rinaldi T."/>
            <person name="Robben J."/>
            <person name="Rodrigues-Pousada C."/>
            <person name="Rodriguez-Belmonte E."/>
            <person name="Rodriguez-Torres A.M."/>
            <person name="Rose M."/>
            <person name="Ruzzi M."/>
            <person name="Saliola M."/>
            <person name="Sanchez-Perez M."/>
            <person name="Schaefer B."/>
            <person name="Schaefer M."/>
            <person name="Scharfe M."/>
            <person name="Schmidheini T."/>
            <person name="Schreer A."/>
            <person name="Skala J."/>
            <person name="Souciet J.-L."/>
            <person name="Steensma H.Y."/>
            <person name="Talla E."/>
            <person name="Thierry A."/>
            <person name="Vandenbol M."/>
            <person name="van der Aart Q.J.M."/>
            <person name="Van Dyck L."/>
            <person name="Vanoni M."/>
            <person name="Verhasselt P."/>
            <person name="Voet M."/>
            <person name="Volckaert G."/>
            <person name="Wambutt R."/>
            <person name="Watson M.D."/>
            <person name="Weber N."/>
            <person name="Wedler E."/>
            <person name="Wedler H."/>
            <person name="Wipfli P."/>
            <person name="Wolf K."/>
            <person name="Wright L.F."/>
            <person name="Zaccaria P."/>
            <person name="Zimmermann M."/>
            <person name="Zollner A."/>
            <person name="Kleine K."/>
        </authorList>
    </citation>
    <scope>NUCLEOTIDE SEQUENCE [LARGE SCALE GENOMIC DNA]</scope>
    <source>
        <strain>ATCC 204508 / S288c</strain>
    </source>
</reference>
<reference key="4">
    <citation type="journal article" date="2014" name="G3 (Bethesda)">
        <title>The reference genome sequence of Saccharomyces cerevisiae: Then and now.</title>
        <authorList>
            <person name="Engel S.R."/>
            <person name="Dietrich F.S."/>
            <person name="Fisk D.G."/>
            <person name="Binkley G."/>
            <person name="Balakrishnan R."/>
            <person name="Costanzo M.C."/>
            <person name="Dwight S.S."/>
            <person name="Hitz B.C."/>
            <person name="Karra K."/>
            <person name="Nash R.S."/>
            <person name="Weng S."/>
            <person name="Wong E.D."/>
            <person name="Lloyd P."/>
            <person name="Skrzypek M.S."/>
            <person name="Miyasato S.R."/>
            <person name="Simison M."/>
            <person name="Cherry J.M."/>
        </authorList>
    </citation>
    <scope>GENOME REANNOTATION</scope>
    <source>
        <strain>ATCC 204508 / S288c</strain>
    </source>
</reference>
<reference key="5">
    <citation type="journal article" date="1999" name="FEBS Lett.">
        <title>Concurrent knock-out of at least 20 transporter genes is required to block uptake of hexoses in Saccharomyces cerevisiae.</title>
        <authorList>
            <person name="Wieczorke R."/>
            <person name="Krampe S."/>
            <person name="Weierstall T."/>
            <person name="Freidel K."/>
            <person name="Hollenberg C.P."/>
            <person name="Boles E."/>
        </authorList>
    </citation>
    <scope>FUNCTION</scope>
    <scope>INDUCTION</scope>
</reference>
<reference key="6">
    <citation type="journal article" date="2002" name="Yeast">
        <title>Characterization of the putative maltose transporters encoded by YDL247w and YJR160c.</title>
        <authorList>
            <person name="Day R.E."/>
            <person name="Higgins V.J."/>
            <person name="Rogers P.J."/>
            <person name="Dawes I.W."/>
        </authorList>
    </citation>
    <scope>FUNCTION</scope>
    <scope>INDUCTION</scope>
</reference>
<reference key="7">
    <citation type="journal article" date="2006" name="Proc. Natl. Acad. Sci. U.S.A.">
        <title>A global topology map of the Saccharomyces cerevisiae membrane proteome.</title>
        <authorList>
            <person name="Kim H."/>
            <person name="Melen K."/>
            <person name="Oesterberg M."/>
            <person name="von Heijne G."/>
        </authorList>
    </citation>
    <scope>TOPOLOGY [LARGE SCALE ANALYSIS]</scope>
    <source>
        <strain>ATCC 208353 / W303-1A</strain>
    </source>
</reference>
<comment type="function">
    <text evidence="3 4 5">High-affinity uptake of alpha-glucosides such as maltose, turanose, isomaltose, alpha-methylglucoside, maltotriose, palatinose, trehalose, melezitose and glucose. Acts with the concomitant transport of protons into the cell (symport system).</text>
</comment>
<comment type="subcellular location">
    <subcellularLocation>
        <location evidence="7">Cell membrane</location>
        <topology evidence="1">Multi-pass membrane protein</topology>
    </subcellularLocation>
</comment>
<comment type="induction">
    <text evidence="3 4 5">By maltose and maltotriose (PubMed:10618490, PubMed:12210897, PubMed:8594329). Repressed by glucose (PubMed:10618490, PubMed:12210897, PubMed:8594329).</text>
</comment>
<comment type="similarity">
    <text evidence="6">Belongs to the major facilitator superfamily. Sugar transporter (TC 2.A.1.1) family.</text>
</comment>
<sequence>MKNIISLVSKKKAASKNEDKNISESSRDIVNQQEVFNTEDFEEGKKDSAFELDHLEFTTNSAQLGDSDEDNENVINEMNATDDANEANSEEKSMTLKQALLKYPKAALWSILVSTTLVMEGYDTALLSALYALPVFQRKFGTLNGEGSYEITSQWQIGLNMCVLCGEMIGLQITTYMVEFMGNRYTMITALGLLTAYIFILYYCKSLAMIAVGQILSAIPWGCFQSLAVTYASEVCPLALRYYMTSYSNICWLFGQIFASGIMKNSQENLGNSDLGYKLPFALQWIWPAPLMIGIFFAPESPWWLVRKDRVAEARKSLSRILSGKGAEKDIQVDLTLKQIELTIEKERLLASKSGSFFNCFKGVNGRRTRLACLTWVAQNSSGAVLLGYSTYFFERAGMATDKAFTFSLIQYCLGLAGTLCSWVISGRVGRWTILTYGLAFQMVCLFIIGGMGFGSGSSASNGAGGLLLALSFFYNAGIGAVVYCIVAEIPSAELRTKTIVLARICYNLMAVINAILTPYMLNVSDWNWGAKTGLYWGGFTAVTLAWVIIDLPETTGRTFSEINELFNQGVPARKFASTVVDPFGKGKTQHDSLADESISQSSSIKQRELNAADKC</sequence>
<feature type="chain" id="PRO_0000050425" description="General alpha-glucoside permease">
    <location>
        <begin position="1"/>
        <end position="616"/>
    </location>
</feature>
<feature type="topological domain" description="Cytoplasmic" evidence="1">
    <location>
        <begin position="1"/>
        <end position="115"/>
    </location>
</feature>
<feature type="transmembrane region" description="Helical; Name=1" evidence="1">
    <location>
        <begin position="116"/>
        <end position="136"/>
    </location>
</feature>
<feature type="topological domain" description="Extracellular" evidence="1">
    <location>
        <begin position="137"/>
        <end position="150"/>
    </location>
</feature>
<feature type="transmembrane region" description="Helical; Name=2" evidence="1">
    <location>
        <begin position="151"/>
        <end position="171"/>
    </location>
</feature>
<feature type="topological domain" description="Cytoplasmic" evidence="1">
    <location>
        <begin position="172"/>
        <end position="186"/>
    </location>
</feature>
<feature type="transmembrane region" description="Helical; Name=3" evidence="1">
    <location>
        <begin position="187"/>
        <end position="207"/>
    </location>
</feature>
<feature type="topological domain" description="Extracellular" evidence="1">
    <location>
        <position position="208"/>
    </location>
</feature>
<feature type="transmembrane region" description="Helical; Name=4" evidence="1">
    <location>
        <begin position="209"/>
        <end position="229"/>
    </location>
</feature>
<feature type="topological domain" description="Cytoplasmic" evidence="1">
    <location>
        <begin position="230"/>
        <end position="242"/>
    </location>
</feature>
<feature type="transmembrane region" description="Helical; Name=5" evidence="1">
    <location>
        <begin position="243"/>
        <end position="263"/>
    </location>
</feature>
<feature type="topological domain" description="Extracellular" evidence="1">
    <location>
        <begin position="264"/>
        <end position="278"/>
    </location>
</feature>
<feature type="transmembrane region" description="Helical; Name=6" evidence="1">
    <location>
        <begin position="279"/>
        <end position="299"/>
    </location>
</feature>
<feature type="topological domain" description="Cytoplasmic" evidence="1">
    <location>
        <begin position="300"/>
        <end position="370"/>
    </location>
</feature>
<feature type="transmembrane region" description="Helical; Name=7" evidence="1">
    <location>
        <begin position="371"/>
        <end position="391"/>
    </location>
</feature>
<feature type="topological domain" description="Extracellular" evidence="1">
    <location>
        <begin position="392"/>
        <end position="404"/>
    </location>
</feature>
<feature type="transmembrane region" description="Helical; Name=8" evidence="1">
    <location>
        <begin position="405"/>
        <end position="425"/>
    </location>
</feature>
<feature type="topological domain" description="Cytoplasmic" evidence="1">
    <location>
        <begin position="426"/>
        <end position="433"/>
    </location>
</feature>
<feature type="transmembrane region" description="Helical; Name=9" evidence="1">
    <location>
        <begin position="434"/>
        <end position="454"/>
    </location>
</feature>
<feature type="topological domain" description="Extracellular" evidence="1">
    <location>
        <begin position="455"/>
        <end position="466"/>
    </location>
</feature>
<feature type="transmembrane region" description="Helical; Name=10" evidence="1">
    <location>
        <begin position="467"/>
        <end position="487"/>
    </location>
</feature>
<feature type="topological domain" description="Cytoplasmic" evidence="1">
    <location>
        <begin position="488"/>
        <end position="499"/>
    </location>
</feature>
<feature type="transmembrane region" description="Helical; Name=11" evidence="1">
    <location>
        <begin position="500"/>
        <end position="520"/>
    </location>
</feature>
<feature type="topological domain" description="Extracellular" evidence="1">
    <location>
        <begin position="521"/>
        <end position="532"/>
    </location>
</feature>
<feature type="transmembrane region" description="Helical; Name=12" evidence="1">
    <location>
        <begin position="533"/>
        <end position="553"/>
    </location>
</feature>
<feature type="topological domain" description="Cytoplasmic" evidence="1">
    <location>
        <begin position="554"/>
        <end position="616"/>
    </location>
</feature>
<feature type="region of interest" description="Disordered" evidence="2">
    <location>
        <begin position="15"/>
        <end position="40"/>
    </location>
</feature>
<feature type="region of interest" description="Disordered" evidence="2">
    <location>
        <begin position="587"/>
        <end position="616"/>
    </location>
</feature>
<feature type="compositionally biased region" description="Basic and acidic residues" evidence="2">
    <location>
        <begin position="15"/>
        <end position="27"/>
    </location>
</feature>
<feature type="compositionally biased region" description="Basic and acidic residues" evidence="2">
    <location>
        <begin position="606"/>
        <end position="616"/>
    </location>
</feature>
<feature type="glycosylation site" description="N-linked (GlcNAc...) asparagine" evidence="1">
    <location>
        <position position="523"/>
    </location>
</feature>
<feature type="sequence conflict" description="In Ref. 1; AAB07600." evidence="6" ref="1">
    <original>RAG</original>
    <variation>KKQV</variation>
    <location>
        <begin position="396"/>
        <end position="398"/>
    </location>
</feature>
<dbReference type="EMBL" id="L47346">
    <property type="protein sequence ID" value="AAB07600.1"/>
    <property type="molecule type" value="Genomic_DNA"/>
</dbReference>
<dbReference type="EMBL" id="Z73074">
    <property type="protein sequence ID" value="CAA97322.1"/>
    <property type="molecule type" value="Genomic_DNA"/>
</dbReference>
<dbReference type="EMBL" id="BK006941">
    <property type="protein sequence ID" value="DAA08377.1"/>
    <property type="molecule type" value="Genomic_DNA"/>
</dbReference>
<dbReference type="PIR" id="S64624">
    <property type="entry name" value="S64624"/>
</dbReference>
<dbReference type="RefSeq" id="NP_011805.3">
    <property type="nucleotide sequence ID" value="NM_001181418.3"/>
</dbReference>
<dbReference type="SMR" id="P53048"/>
<dbReference type="BioGRID" id="33539">
    <property type="interactions" value="114"/>
</dbReference>
<dbReference type="DIP" id="DIP-5567N"/>
<dbReference type="FunCoup" id="P53048">
    <property type="interactions" value="78"/>
</dbReference>
<dbReference type="IntAct" id="P53048">
    <property type="interactions" value="2"/>
</dbReference>
<dbReference type="MINT" id="P53048"/>
<dbReference type="STRING" id="4932.YGR289C"/>
<dbReference type="TCDB" id="2.A.1.1.11">
    <property type="family name" value="the major facilitator superfamily (mfs)"/>
</dbReference>
<dbReference type="GlyCosmos" id="P53048">
    <property type="glycosylation" value="1 site, No reported glycans"/>
</dbReference>
<dbReference type="GlyGen" id="P53048">
    <property type="glycosylation" value="1 site"/>
</dbReference>
<dbReference type="PaxDb" id="4932-YGR289C"/>
<dbReference type="EnsemblFungi" id="YGR289C_mRNA">
    <property type="protein sequence ID" value="YGR289C"/>
    <property type="gene ID" value="YGR289C"/>
</dbReference>
<dbReference type="GeneID" id="853207"/>
<dbReference type="KEGG" id="sce:YGR289C"/>
<dbReference type="AGR" id="SGD:S000003521"/>
<dbReference type="SGD" id="S000003521">
    <property type="gene designation" value="MAL11"/>
</dbReference>
<dbReference type="VEuPathDB" id="FungiDB:YGR289C"/>
<dbReference type="eggNOG" id="KOG0254">
    <property type="taxonomic scope" value="Eukaryota"/>
</dbReference>
<dbReference type="GeneTree" id="ENSGT00940000176341"/>
<dbReference type="HOGENOM" id="CLU_001265_11_5_1"/>
<dbReference type="InParanoid" id="P53048"/>
<dbReference type="OMA" id="MTLIMEG"/>
<dbReference type="OrthoDB" id="6612291at2759"/>
<dbReference type="BioCyc" id="YEAST:G3O-30949-MONOMER"/>
<dbReference type="BioGRID-ORCS" id="853207">
    <property type="hits" value="0 hits in 10 CRISPR screens"/>
</dbReference>
<dbReference type="PRO" id="PR:P53048"/>
<dbReference type="Proteomes" id="UP000002311">
    <property type="component" value="Chromosome VII"/>
</dbReference>
<dbReference type="RNAct" id="P53048">
    <property type="molecule type" value="protein"/>
</dbReference>
<dbReference type="GO" id="GO:0016020">
    <property type="term" value="C:membrane"/>
    <property type="evidence" value="ECO:0000247"/>
    <property type="project" value="SGD"/>
</dbReference>
<dbReference type="GO" id="GO:0005886">
    <property type="term" value="C:plasma membrane"/>
    <property type="evidence" value="ECO:0007669"/>
    <property type="project" value="UniProtKB-SubCell"/>
</dbReference>
<dbReference type="GO" id="GO:0005352">
    <property type="term" value="F:alpha-glucoside:proton symporter activity"/>
    <property type="evidence" value="ECO:0000314"/>
    <property type="project" value="SGD"/>
</dbReference>
<dbReference type="GO" id="GO:0005351">
    <property type="term" value="F:carbohydrate:proton symporter activity"/>
    <property type="evidence" value="ECO:0000318"/>
    <property type="project" value="GO_Central"/>
</dbReference>
<dbReference type="GO" id="GO:0005364">
    <property type="term" value="F:maltose:proton symporter activity"/>
    <property type="evidence" value="ECO:0000315"/>
    <property type="project" value="SGD"/>
</dbReference>
<dbReference type="GO" id="GO:0015574">
    <property type="term" value="F:trehalose transmembrane transporter activity"/>
    <property type="evidence" value="ECO:0000314"/>
    <property type="project" value="SGD"/>
</dbReference>
<dbReference type="GO" id="GO:0000017">
    <property type="term" value="P:alpha-glucoside transport"/>
    <property type="evidence" value="ECO:0000314"/>
    <property type="project" value="UniProtKB"/>
</dbReference>
<dbReference type="GO" id="GO:0008643">
    <property type="term" value="P:carbohydrate transport"/>
    <property type="evidence" value="ECO:0000318"/>
    <property type="project" value="GO_Central"/>
</dbReference>
<dbReference type="GO" id="GO:0046352">
    <property type="term" value="P:disaccharide catabolic process"/>
    <property type="evidence" value="ECO:0000315"/>
    <property type="project" value="SGD"/>
</dbReference>
<dbReference type="GO" id="GO:0000023">
    <property type="term" value="P:maltose metabolic process"/>
    <property type="evidence" value="ECO:0007669"/>
    <property type="project" value="UniProtKB-KW"/>
</dbReference>
<dbReference type="GO" id="GO:0015768">
    <property type="term" value="P:maltose transport"/>
    <property type="evidence" value="ECO:0000315"/>
    <property type="project" value="SGD"/>
</dbReference>
<dbReference type="GO" id="GO:0015771">
    <property type="term" value="P:trehalose transport"/>
    <property type="evidence" value="ECO:0000314"/>
    <property type="project" value="SGD"/>
</dbReference>
<dbReference type="FunFam" id="1.20.1250.20:FF:000254">
    <property type="entry name" value="MAL31p Maltose permease"/>
    <property type="match status" value="1"/>
</dbReference>
<dbReference type="Gene3D" id="1.20.1250.20">
    <property type="entry name" value="MFS general substrate transporter like domains"/>
    <property type="match status" value="1"/>
</dbReference>
<dbReference type="InterPro" id="IPR020846">
    <property type="entry name" value="MFS_dom"/>
</dbReference>
<dbReference type="InterPro" id="IPR005828">
    <property type="entry name" value="MFS_sugar_transport-like"/>
</dbReference>
<dbReference type="InterPro" id="IPR050360">
    <property type="entry name" value="MFS_Sugar_Transporters"/>
</dbReference>
<dbReference type="InterPro" id="IPR036259">
    <property type="entry name" value="MFS_trans_sf"/>
</dbReference>
<dbReference type="InterPro" id="IPR003663">
    <property type="entry name" value="Sugar/inositol_transpt"/>
</dbReference>
<dbReference type="NCBIfam" id="TIGR00879">
    <property type="entry name" value="SP"/>
    <property type="match status" value="1"/>
</dbReference>
<dbReference type="PANTHER" id="PTHR48022:SF5">
    <property type="entry name" value="ALPHA-GLUCOSIDES PERMEASE MPH2-RELATED"/>
    <property type="match status" value="1"/>
</dbReference>
<dbReference type="PANTHER" id="PTHR48022">
    <property type="entry name" value="PLASTIDIC GLUCOSE TRANSPORTER 4"/>
    <property type="match status" value="1"/>
</dbReference>
<dbReference type="Pfam" id="PF00083">
    <property type="entry name" value="Sugar_tr"/>
    <property type="match status" value="1"/>
</dbReference>
<dbReference type="SUPFAM" id="SSF103473">
    <property type="entry name" value="MFS general substrate transporter"/>
    <property type="match status" value="1"/>
</dbReference>
<dbReference type="PROSITE" id="PS50850">
    <property type="entry name" value="MFS"/>
    <property type="match status" value="1"/>
</dbReference>